<sequence>MMGNKKIVLAYSGGLDTSVAVKWLTDKGFDVIADCMDVGEGKDLNFIHDKALQVGAVESVVLDCKEEFAKIFVGAALKGNLMYENKYPLVSALSRPLIAQKLVEVAKEKGATAIAHGCTGKGNDQVRFEVAIHSLAPELEVIAPVREWHWAREEEIEYANQNGVPIPADLDNPYSIDMNLWGRAIEAGVLENPWNTCPEDAFFMTNSVENAPNEAEFIEVEFKEGLPIALNGKSLELHEIIKKVNIIAGKHGIGRIDHIENRLVGIKSREFYECPAAITLLKAHKDLEDLTFVRELAHFKPVLENELANLIYNGLWFNPATKALIAYLDETQKVVNGIVKIKLYKGLATPVGRKSTNSLYSEKLATYTAADEFDQAAAVGFIKLWGLPTQVNAQVNLK</sequence>
<evidence type="ECO:0000255" key="1">
    <source>
        <dbReference type="HAMAP-Rule" id="MF_00005"/>
    </source>
</evidence>
<name>ASSY_LACLA</name>
<accession>P57799</accession>
<organism>
    <name type="scientific">Lactococcus lactis subsp. lactis (strain IL1403)</name>
    <name type="common">Streptococcus lactis</name>
    <dbReference type="NCBI Taxonomy" id="272623"/>
    <lineage>
        <taxon>Bacteria</taxon>
        <taxon>Bacillati</taxon>
        <taxon>Bacillota</taxon>
        <taxon>Bacilli</taxon>
        <taxon>Lactobacillales</taxon>
        <taxon>Streptococcaceae</taxon>
        <taxon>Lactococcus</taxon>
    </lineage>
</organism>
<reference key="1">
    <citation type="journal article" date="2001" name="Genome Res.">
        <title>The complete genome sequence of the lactic acid bacterium Lactococcus lactis ssp. lactis IL1403.</title>
        <authorList>
            <person name="Bolotin A."/>
            <person name="Wincker P."/>
            <person name="Mauger S."/>
            <person name="Jaillon O."/>
            <person name="Malarme K."/>
            <person name="Weissenbach J."/>
            <person name="Ehrlich S.D."/>
            <person name="Sorokin A."/>
        </authorList>
    </citation>
    <scope>NUCLEOTIDE SEQUENCE [LARGE SCALE GENOMIC DNA]</scope>
    <source>
        <strain>IL1403</strain>
    </source>
</reference>
<proteinExistence type="inferred from homology"/>
<gene>
    <name evidence="1" type="primary">argG</name>
    <name type="ordered locus">LL0124</name>
    <name type="ORF">L126739</name>
</gene>
<protein>
    <recommendedName>
        <fullName evidence="1">Argininosuccinate synthase</fullName>
        <ecNumber evidence="1">6.3.4.5</ecNumber>
    </recommendedName>
    <alternativeName>
        <fullName evidence="1">Citrulline--aspartate ligase</fullName>
    </alternativeName>
</protein>
<keyword id="KW-0028">Amino-acid biosynthesis</keyword>
<keyword id="KW-0055">Arginine biosynthesis</keyword>
<keyword id="KW-0067">ATP-binding</keyword>
<keyword id="KW-0963">Cytoplasm</keyword>
<keyword id="KW-0436">Ligase</keyword>
<keyword id="KW-0547">Nucleotide-binding</keyword>
<keyword id="KW-1185">Reference proteome</keyword>
<comment type="catalytic activity">
    <reaction evidence="1">
        <text>L-citrulline + L-aspartate + ATP = 2-(N(omega)-L-arginino)succinate + AMP + diphosphate + H(+)</text>
        <dbReference type="Rhea" id="RHEA:10932"/>
        <dbReference type="ChEBI" id="CHEBI:15378"/>
        <dbReference type="ChEBI" id="CHEBI:29991"/>
        <dbReference type="ChEBI" id="CHEBI:30616"/>
        <dbReference type="ChEBI" id="CHEBI:33019"/>
        <dbReference type="ChEBI" id="CHEBI:57472"/>
        <dbReference type="ChEBI" id="CHEBI:57743"/>
        <dbReference type="ChEBI" id="CHEBI:456215"/>
        <dbReference type="EC" id="6.3.4.5"/>
    </reaction>
</comment>
<comment type="pathway">
    <text evidence="1">Amino-acid biosynthesis; L-arginine biosynthesis; L-arginine from L-ornithine and carbamoyl phosphate: step 2/3.</text>
</comment>
<comment type="subunit">
    <text evidence="1">Homotetramer.</text>
</comment>
<comment type="subcellular location">
    <subcellularLocation>
        <location evidence="1">Cytoplasm</location>
    </subcellularLocation>
</comment>
<comment type="similarity">
    <text evidence="1">Belongs to the argininosuccinate synthase family. Type 1 subfamily.</text>
</comment>
<feature type="chain" id="PRO_0000148600" description="Argininosuccinate synthase">
    <location>
        <begin position="1"/>
        <end position="398"/>
    </location>
</feature>
<feature type="binding site" evidence="1">
    <location>
        <begin position="10"/>
        <end position="18"/>
    </location>
    <ligand>
        <name>ATP</name>
        <dbReference type="ChEBI" id="CHEBI:30616"/>
    </ligand>
</feature>
<feature type="binding site" evidence="1">
    <location>
        <position position="87"/>
    </location>
    <ligand>
        <name>L-citrulline</name>
        <dbReference type="ChEBI" id="CHEBI:57743"/>
    </ligand>
</feature>
<feature type="binding site" evidence="1">
    <location>
        <position position="117"/>
    </location>
    <ligand>
        <name>ATP</name>
        <dbReference type="ChEBI" id="CHEBI:30616"/>
    </ligand>
</feature>
<feature type="binding site" evidence="1">
    <location>
        <position position="119"/>
    </location>
    <ligand>
        <name>L-aspartate</name>
        <dbReference type="ChEBI" id="CHEBI:29991"/>
    </ligand>
</feature>
<feature type="binding site" evidence="1">
    <location>
        <position position="123"/>
    </location>
    <ligand>
        <name>L-aspartate</name>
        <dbReference type="ChEBI" id="CHEBI:29991"/>
    </ligand>
</feature>
<feature type="binding site" evidence="1">
    <location>
        <position position="123"/>
    </location>
    <ligand>
        <name>L-citrulline</name>
        <dbReference type="ChEBI" id="CHEBI:57743"/>
    </ligand>
</feature>
<feature type="binding site" evidence="1">
    <location>
        <position position="124"/>
    </location>
    <ligand>
        <name>L-aspartate</name>
        <dbReference type="ChEBI" id="CHEBI:29991"/>
    </ligand>
</feature>
<feature type="binding site" evidence="1">
    <location>
        <position position="127"/>
    </location>
    <ligand>
        <name>L-citrulline</name>
        <dbReference type="ChEBI" id="CHEBI:57743"/>
    </ligand>
</feature>
<feature type="binding site" evidence="1">
    <location>
        <position position="175"/>
    </location>
    <ligand>
        <name>L-citrulline</name>
        <dbReference type="ChEBI" id="CHEBI:57743"/>
    </ligand>
</feature>
<feature type="binding site" evidence="1">
    <location>
        <position position="260"/>
    </location>
    <ligand>
        <name>L-citrulline</name>
        <dbReference type="ChEBI" id="CHEBI:57743"/>
    </ligand>
</feature>
<feature type="binding site" evidence="1">
    <location>
        <position position="272"/>
    </location>
    <ligand>
        <name>L-citrulline</name>
        <dbReference type="ChEBI" id="CHEBI:57743"/>
    </ligand>
</feature>
<dbReference type="EC" id="6.3.4.5" evidence="1"/>
<dbReference type="EMBL" id="AE005176">
    <property type="protein sequence ID" value="AAK04222.1"/>
    <property type="molecule type" value="Genomic_DNA"/>
</dbReference>
<dbReference type="PIR" id="D86640">
    <property type="entry name" value="D86640"/>
</dbReference>
<dbReference type="SMR" id="P57799"/>
<dbReference type="PaxDb" id="272623-L126739"/>
<dbReference type="EnsemblBacteria" id="AAK04222">
    <property type="protein sequence ID" value="AAK04222"/>
    <property type="gene ID" value="L126739"/>
</dbReference>
<dbReference type="KEGG" id="lla:L126739"/>
<dbReference type="eggNOG" id="COG0137">
    <property type="taxonomic scope" value="Bacteria"/>
</dbReference>
<dbReference type="HOGENOM" id="CLU_032784_4_2_9"/>
<dbReference type="OrthoDB" id="9801641at2"/>
<dbReference type="UniPathway" id="UPA00068">
    <property type="reaction ID" value="UER00113"/>
</dbReference>
<dbReference type="Proteomes" id="UP000002196">
    <property type="component" value="Chromosome"/>
</dbReference>
<dbReference type="GO" id="GO:0005737">
    <property type="term" value="C:cytoplasm"/>
    <property type="evidence" value="ECO:0007669"/>
    <property type="project" value="UniProtKB-SubCell"/>
</dbReference>
<dbReference type="GO" id="GO:0004055">
    <property type="term" value="F:argininosuccinate synthase activity"/>
    <property type="evidence" value="ECO:0007669"/>
    <property type="project" value="UniProtKB-UniRule"/>
</dbReference>
<dbReference type="GO" id="GO:0005524">
    <property type="term" value="F:ATP binding"/>
    <property type="evidence" value="ECO:0007669"/>
    <property type="project" value="UniProtKB-UniRule"/>
</dbReference>
<dbReference type="GO" id="GO:0000053">
    <property type="term" value="P:argininosuccinate metabolic process"/>
    <property type="evidence" value="ECO:0007669"/>
    <property type="project" value="TreeGrafter"/>
</dbReference>
<dbReference type="GO" id="GO:0006526">
    <property type="term" value="P:L-arginine biosynthetic process"/>
    <property type="evidence" value="ECO:0007669"/>
    <property type="project" value="UniProtKB-UniRule"/>
</dbReference>
<dbReference type="GO" id="GO:0000050">
    <property type="term" value="P:urea cycle"/>
    <property type="evidence" value="ECO:0007669"/>
    <property type="project" value="TreeGrafter"/>
</dbReference>
<dbReference type="CDD" id="cd01999">
    <property type="entry name" value="ASS"/>
    <property type="match status" value="1"/>
</dbReference>
<dbReference type="FunFam" id="1.20.5.470:FF:000002">
    <property type="entry name" value="Argininosuccinate synthase"/>
    <property type="match status" value="1"/>
</dbReference>
<dbReference type="FunFam" id="3.40.50.620:FF:000038">
    <property type="entry name" value="Argininosuccinate synthase"/>
    <property type="match status" value="1"/>
</dbReference>
<dbReference type="FunFam" id="3.90.1260.10:FF:000007">
    <property type="entry name" value="Argininosuccinate synthase"/>
    <property type="match status" value="1"/>
</dbReference>
<dbReference type="Gene3D" id="3.90.1260.10">
    <property type="entry name" value="Argininosuccinate synthetase, chain A, domain 2"/>
    <property type="match status" value="1"/>
</dbReference>
<dbReference type="Gene3D" id="3.40.50.620">
    <property type="entry name" value="HUPs"/>
    <property type="match status" value="1"/>
</dbReference>
<dbReference type="Gene3D" id="1.20.5.470">
    <property type="entry name" value="Single helix bin"/>
    <property type="match status" value="1"/>
</dbReference>
<dbReference type="HAMAP" id="MF_00005">
    <property type="entry name" value="Arg_succ_synth_type1"/>
    <property type="match status" value="1"/>
</dbReference>
<dbReference type="InterPro" id="IPR048268">
    <property type="entry name" value="Arginosuc_syn_C"/>
</dbReference>
<dbReference type="InterPro" id="IPR048267">
    <property type="entry name" value="Arginosuc_syn_N"/>
</dbReference>
<dbReference type="InterPro" id="IPR001518">
    <property type="entry name" value="Arginosuc_synth"/>
</dbReference>
<dbReference type="InterPro" id="IPR018223">
    <property type="entry name" value="Arginosuc_synth_CS"/>
</dbReference>
<dbReference type="InterPro" id="IPR023434">
    <property type="entry name" value="Arginosuc_synth_type_1_subfam"/>
</dbReference>
<dbReference type="InterPro" id="IPR024074">
    <property type="entry name" value="AS_cat/multimer_dom_body"/>
</dbReference>
<dbReference type="InterPro" id="IPR014729">
    <property type="entry name" value="Rossmann-like_a/b/a_fold"/>
</dbReference>
<dbReference type="NCBIfam" id="TIGR00032">
    <property type="entry name" value="argG"/>
    <property type="match status" value="1"/>
</dbReference>
<dbReference type="NCBIfam" id="NF001770">
    <property type="entry name" value="PRK00509.1"/>
    <property type="match status" value="1"/>
</dbReference>
<dbReference type="PANTHER" id="PTHR11587">
    <property type="entry name" value="ARGININOSUCCINATE SYNTHASE"/>
    <property type="match status" value="1"/>
</dbReference>
<dbReference type="PANTHER" id="PTHR11587:SF2">
    <property type="entry name" value="ARGININOSUCCINATE SYNTHASE"/>
    <property type="match status" value="1"/>
</dbReference>
<dbReference type="Pfam" id="PF20979">
    <property type="entry name" value="Arginosuc_syn_C"/>
    <property type="match status" value="1"/>
</dbReference>
<dbReference type="Pfam" id="PF00764">
    <property type="entry name" value="Arginosuc_synth"/>
    <property type="match status" value="1"/>
</dbReference>
<dbReference type="SUPFAM" id="SSF52402">
    <property type="entry name" value="Adenine nucleotide alpha hydrolases-like"/>
    <property type="match status" value="1"/>
</dbReference>
<dbReference type="SUPFAM" id="SSF69864">
    <property type="entry name" value="Argininosuccinate synthetase, C-terminal domain"/>
    <property type="match status" value="1"/>
</dbReference>
<dbReference type="PROSITE" id="PS00564">
    <property type="entry name" value="ARGININOSUCCIN_SYN_1"/>
    <property type="match status" value="1"/>
</dbReference>
<dbReference type="PROSITE" id="PS00565">
    <property type="entry name" value="ARGININOSUCCIN_SYN_2"/>
    <property type="match status" value="1"/>
</dbReference>